<gene>
    <name type="primary">gltD</name>
</gene>
<proteinExistence type="evidence at protein level"/>
<accession>Q05756</accession>
<accession>Q9EXL4</accession>
<keyword id="KW-0002">3D-structure</keyword>
<keyword id="KW-0004">4Fe-4S</keyword>
<keyword id="KW-0028">Amino-acid biosynthesis</keyword>
<keyword id="KW-0903">Direct protein sequencing</keyword>
<keyword id="KW-0314">Glutamate biosynthesis</keyword>
<keyword id="KW-0408">Iron</keyword>
<keyword id="KW-0411">Iron-sulfur</keyword>
<keyword id="KW-0479">Metal-binding</keyword>
<keyword id="KW-0521">NADP</keyword>
<keyword id="KW-0560">Oxidoreductase</keyword>
<protein>
    <recommendedName>
        <fullName>Glutamate synthase [NADPH] small chain</fullName>
        <ecNumber>1.4.1.13</ecNumber>
    </recommendedName>
    <alternativeName>
        <fullName>Glutamate synthase subunit beta</fullName>
        <shortName>GLTS beta chain</shortName>
    </alternativeName>
    <alternativeName>
        <fullName>NADPH-GOGAT</fullName>
    </alternativeName>
</protein>
<name>GLTD_AZOBR</name>
<reference key="1">
    <citation type="journal article" date="1993" name="J. Biol. Chem.">
        <title>Glutamate synthase genes of the diazotroph Azospirillum brasilense. Cloning, sequencing, and analysis of functional domains.</title>
        <authorList>
            <person name="Pelanda R."/>
            <person name="Vanoni M.A."/>
            <person name="Perego M."/>
            <person name="Piubelli L."/>
            <person name="Galizzi A."/>
            <person name="Curti B."/>
            <person name="Zanetti G."/>
        </authorList>
    </citation>
    <scope>NUCLEOTIDE SEQUENCE [GENOMIC DNA]</scope>
    <scope>PROTEIN SEQUENCE OF 2-24; 183-204 AND 328-344</scope>
    <source>
        <strain>ATCC 29145 / DSM 1690 / IMET 11303 / Sp7</strain>
    </source>
</reference>
<reference key="2">
    <citation type="submission" date="1999-10" db="EMBL/GenBank/DDBJ databases">
        <authorList>
            <person name="Vanoni M.A."/>
            <person name="Verzotti E."/>
            <person name="Morandi P."/>
            <person name="Curti B."/>
        </authorList>
    </citation>
    <scope>SEQUENCE REVISION TO C-TERMINUS</scope>
</reference>
<reference key="3">
    <citation type="journal article" date="1990" name="Biochim. Biophys. Acta">
        <title>Structural studies on the subunits of glutamate synthase from Azospirillum brasilense.</title>
        <authorList>
            <person name="Vanoni M.A."/>
            <person name="Negri A."/>
            <person name="Zanetti G."/>
            <person name="Ronchi S."/>
            <person name="Curti B."/>
        </authorList>
    </citation>
    <scope>PARTIAL PROTEIN SEQUENCE</scope>
</reference>
<reference key="4">
    <citation type="journal article" date="1994" name="Eur. J. Biochem.">
        <title>Interdomain loops and conformational changes of glutamate synthase as detected by limited proteolysis.</title>
        <authorList>
            <person name="Vanoni M.A."/>
            <person name="Mazzoni A."/>
            <person name="Fumagalli P."/>
            <person name="Negri A."/>
            <person name="Zanetti G."/>
            <person name="Curti B."/>
        </authorList>
    </citation>
    <scope>PROTEIN SEQUENCE OF 2-8</scope>
    <source>
        <strain>Sp6</strain>
    </source>
</reference>
<sequence>MANQRMLGFVHTAQRMPDKRPAAERRQDFAEIYARFSDERANEQANRCSQCGVPFCQVHCPVSNNIPDWLKLTSEGRLEEAYEVSQATNNFPEICGRICPQDRLCEGNCVIEQSTHGAVTIGSVEKYINDTAWDQGWVKPRTPSRELGLSVGVIGAGPAGLAAAEELRAKGYEVHVYDRYDRMGGLLVYGIPGFKLEKSVVERRVKLLADAGVIYHPNFEVGRDASLPELRRKHVAVLVATGVYKARDIKAPGSGLGNIVAALDYLTTSNKVSLGDTVEAYENGSLNAAGKHVVVLGGGDTAMDCVRTAIRQGATSVKCLYRRDRKNMPGSQREVAHAEEEGVEFIWQAAPEGFTGDTVVTGVRAVRIHLGVADATGRQTPQVIEGSEFTVQADLVIKALGFEPEDLPNAFDEPELKVTRWGTLLVDHRTKMTNMDGVFAAGDIVRGASLVVWAIRDGRDAAEGIHAYAKAKAEAPVAVAAE</sequence>
<organism>
    <name type="scientific">Azospirillum brasilense</name>
    <dbReference type="NCBI Taxonomy" id="192"/>
    <lineage>
        <taxon>Bacteria</taxon>
        <taxon>Pseudomonadati</taxon>
        <taxon>Pseudomonadota</taxon>
        <taxon>Alphaproteobacteria</taxon>
        <taxon>Rhodospirillales</taxon>
        <taxon>Azospirillaceae</taxon>
        <taxon>Azospirillum</taxon>
    </lineage>
</organism>
<evidence type="ECO:0000255" key="1"/>
<evidence type="ECO:0000269" key="2">
    <source>
    </source>
</evidence>
<evidence type="ECO:0000269" key="3">
    <source>
    </source>
</evidence>
<evidence type="ECO:0007829" key="4">
    <source>
        <dbReference type="PDB" id="6S6U"/>
    </source>
</evidence>
<evidence type="ECO:0007829" key="5">
    <source>
        <dbReference type="PDB" id="6S6X"/>
    </source>
</evidence>
<feature type="initiator methionine" description="Removed" evidence="2 3">
    <location>
        <position position="1"/>
    </location>
</feature>
<feature type="chain" id="PRO_0000170799" description="Glutamate synthase [NADPH] small chain">
    <location>
        <begin position="2"/>
        <end position="482"/>
    </location>
</feature>
<feature type="domain" description="4Fe-4S ferredoxin-type">
    <location>
        <begin position="39"/>
        <end position="72"/>
    </location>
</feature>
<feature type="binding site" evidence="1">
    <location>
        <position position="95"/>
    </location>
    <ligand>
        <name>[4Fe-4S] cluster</name>
        <dbReference type="ChEBI" id="CHEBI:49883"/>
    </ligand>
</feature>
<feature type="binding site" evidence="1">
    <location>
        <position position="99"/>
    </location>
    <ligand>
        <name>[4Fe-4S] cluster</name>
        <dbReference type="ChEBI" id="CHEBI:49883"/>
    </ligand>
</feature>
<feature type="binding site" evidence="1">
    <location>
        <position position="105"/>
    </location>
    <ligand>
        <name>[4Fe-4S] cluster</name>
        <dbReference type="ChEBI" id="CHEBI:49883"/>
    </ligand>
</feature>
<feature type="binding site" evidence="1">
    <location>
        <position position="109"/>
    </location>
    <ligand>
        <name>[4Fe-4S] cluster</name>
        <dbReference type="ChEBI" id="CHEBI:49883"/>
    </ligand>
</feature>
<feature type="helix" evidence="4">
    <location>
        <begin position="22"/>
        <end position="25"/>
    </location>
</feature>
<feature type="helix" evidence="4">
    <location>
        <begin position="38"/>
        <end position="44"/>
    </location>
</feature>
<feature type="helix" evidence="4">
    <location>
        <begin position="45"/>
        <end position="47"/>
    </location>
</feature>
<feature type="helix" evidence="4">
    <location>
        <begin position="55"/>
        <end position="58"/>
    </location>
</feature>
<feature type="helix" evidence="4">
    <location>
        <begin position="66"/>
        <end position="74"/>
    </location>
</feature>
<feature type="helix" evidence="4">
    <location>
        <begin position="78"/>
        <end position="86"/>
    </location>
</feature>
<feature type="helix" evidence="4">
    <location>
        <begin position="92"/>
        <end position="98"/>
    </location>
</feature>
<feature type="turn" evidence="4">
    <location>
        <begin position="101"/>
        <end position="103"/>
    </location>
</feature>
<feature type="turn" evidence="4">
    <location>
        <begin position="106"/>
        <end position="108"/>
    </location>
</feature>
<feature type="helix" evidence="4">
    <location>
        <begin position="110"/>
        <end position="113"/>
    </location>
</feature>
<feature type="helix" evidence="4">
    <location>
        <begin position="121"/>
        <end position="133"/>
    </location>
</feature>
<feature type="turn" evidence="4">
    <location>
        <begin position="134"/>
        <end position="136"/>
    </location>
</feature>
<feature type="strand" evidence="4">
    <location>
        <begin position="150"/>
        <end position="154"/>
    </location>
</feature>
<feature type="helix" evidence="4">
    <location>
        <begin position="158"/>
        <end position="170"/>
    </location>
</feature>
<feature type="strand" evidence="4">
    <location>
        <begin position="173"/>
        <end position="177"/>
    </location>
</feature>
<feature type="strand" evidence="4">
    <location>
        <begin position="179"/>
        <end position="182"/>
    </location>
</feature>
<feature type="helix" evidence="4">
    <location>
        <begin position="186"/>
        <end position="189"/>
    </location>
</feature>
<feature type="turn" evidence="4">
    <location>
        <begin position="193"/>
        <end position="195"/>
    </location>
</feature>
<feature type="helix" evidence="4">
    <location>
        <begin position="198"/>
        <end position="211"/>
    </location>
</feature>
<feature type="turn" evidence="4">
    <location>
        <begin position="221"/>
        <end position="223"/>
    </location>
</feature>
<feature type="helix" evidence="4">
    <location>
        <begin position="227"/>
        <end position="233"/>
    </location>
</feature>
<feature type="strand" evidence="4">
    <location>
        <begin position="234"/>
        <end position="239"/>
    </location>
</feature>
<feature type="turn" evidence="4">
    <location>
        <begin position="252"/>
        <end position="255"/>
    </location>
</feature>
<feature type="strand" evidence="4">
    <location>
        <begin position="257"/>
        <end position="261"/>
    </location>
</feature>
<feature type="helix" evidence="4">
    <location>
        <begin position="262"/>
        <end position="274"/>
    </location>
</feature>
<feature type="helix" evidence="4">
    <location>
        <begin position="279"/>
        <end position="282"/>
    </location>
</feature>
<feature type="strand" evidence="5">
    <location>
        <begin position="283"/>
        <end position="286"/>
    </location>
</feature>
<feature type="strand" evidence="4">
    <location>
        <begin position="289"/>
        <end position="297"/>
    </location>
</feature>
<feature type="helix" evidence="4">
    <location>
        <begin position="299"/>
        <end position="311"/>
    </location>
</feature>
<feature type="strand" evidence="4">
    <location>
        <begin position="315"/>
        <end position="320"/>
    </location>
</feature>
<feature type="helix" evidence="4">
    <location>
        <begin position="333"/>
        <end position="341"/>
    </location>
</feature>
<feature type="strand" evidence="4">
    <location>
        <begin position="344"/>
        <end position="346"/>
    </location>
</feature>
<feature type="strand" evidence="4">
    <location>
        <begin position="348"/>
        <end position="370"/>
    </location>
</feature>
<feature type="strand" evidence="4">
    <location>
        <begin position="381"/>
        <end position="392"/>
    </location>
</feature>
<feature type="strand" evidence="4">
    <location>
        <begin position="394"/>
        <end position="398"/>
    </location>
</feature>
<feature type="helix" evidence="4">
    <location>
        <begin position="407"/>
        <end position="411"/>
    </location>
</feature>
<feature type="strand" evidence="4">
    <location>
        <begin position="420"/>
        <end position="422"/>
    </location>
</feature>
<feature type="turn" evidence="4">
    <location>
        <begin position="428"/>
        <end position="430"/>
    </location>
</feature>
<feature type="strand" evidence="4">
    <location>
        <begin position="438"/>
        <end position="440"/>
    </location>
</feature>
<feature type="helix" evidence="4">
    <location>
        <begin position="443"/>
        <end position="446"/>
    </location>
</feature>
<feature type="helix" evidence="4">
    <location>
        <begin position="451"/>
        <end position="474"/>
    </location>
</feature>
<comment type="catalytic activity">
    <reaction>
        <text>2 L-glutamate + NADP(+) = L-glutamine + 2-oxoglutarate + NADPH + H(+)</text>
        <dbReference type="Rhea" id="RHEA:15501"/>
        <dbReference type="ChEBI" id="CHEBI:15378"/>
        <dbReference type="ChEBI" id="CHEBI:16810"/>
        <dbReference type="ChEBI" id="CHEBI:29985"/>
        <dbReference type="ChEBI" id="CHEBI:57783"/>
        <dbReference type="ChEBI" id="CHEBI:58349"/>
        <dbReference type="ChEBI" id="CHEBI:58359"/>
        <dbReference type="EC" id="1.4.1.13"/>
    </reaction>
</comment>
<comment type="cofactor">
    <cofactor>
        <name>[4Fe-4S] cluster</name>
        <dbReference type="ChEBI" id="CHEBI:49883"/>
    </cofactor>
    <text>Binds 1 [4Fe-4S] cluster.</text>
</comment>
<comment type="pathway">
    <text>Amino-acid biosynthesis; L-glutamate biosynthesis via GLT pathway; L-glutamate from 2-oxoglutarate and L-glutamine (NADP(+) route): step 1/1.</text>
</comment>
<comment type="pathway">
    <text>Energy metabolism; nitrogen metabolism.</text>
</comment>
<comment type="subunit">
    <text>Aggregate of 4 catalytic active heterodimers, consisting of a large and a small subunit.</text>
</comment>
<comment type="miscellaneous">
    <text>Glutamine binds to the large subunit and transfers the amido group to 2-oxo-glutamate that apparently binds to the small subunit.</text>
</comment>
<dbReference type="EC" id="1.4.1.13"/>
<dbReference type="EMBL" id="AF192408">
    <property type="protein sequence ID" value="AAG38999.1"/>
    <property type="molecule type" value="Genomic_DNA"/>
</dbReference>
<dbReference type="PIR" id="A46602">
    <property type="entry name" value="A46602"/>
</dbReference>
<dbReference type="RefSeq" id="WP_035677957.1">
    <property type="nucleotide sequence ID" value="NZ_CP012915.1"/>
</dbReference>
<dbReference type="PDB" id="2VDC">
    <property type="method" value="EM"/>
    <property type="resolution" value="9.50 A"/>
    <property type="chains" value="G/H/I/J/K/L=27-482"/>
</dbReference>
<dbReference type="PDB" id="6S6S">
    <property type="method" value="EM"/>
    <property type="resolution" value="3.90 A"/>
    <property type="chains" value="E/F/G/H=1-482"/>
</dbReference>
<dbReference type="PDB" id="6S6T">
    <property type="method" value="EM"/>
    <property type="resolution" value="4.10 A"/>
    <property type="chains" value="E/F/G=1-482"/>
</dbReference>
<dbReference type="PDB" id="6S6U">
    <property type="method" value="EM"/>
    <property type="resolution" value="3.50 A"/>
    <property type="chains" value="G/H/I/J=1-482"/>
</dbReference>
<dbReference type="PDB" id="6S6X">
    <property type="method" value="EM"/>
    <property type="resolution" value="3.50 A"/>
    <property type="chains" value="G/H/I/J/K/L=1-482"/>
</dbReference>
<dbReference type="PDBsum" id="2VDC"/>
<dbReference type="PDBsum" id="6S6S"/>
<dbReference type="PDBsum" id="6S6T"/>
<dbReference type="PDBsum" id="6S6U"/>
<dbReference type="PDBsum" id="6S6X"/>
<dbReference type="EMDB" id="EMD-10104"/>
<dbReference type="EMDB" id="EMD-10105"/>
<dbReference type="EMDB" id="EMD-10106"/>
<dbReference type="EMDB" id="EMD-10108"/>
<dbReference type="SASBDB" id="Q05756"/>
<dbReference type="SMR" id="Q05756"/>
<dbReference type="GeneID" id="56449275"/>
<dbReference type="KEGG" id="ag:AAG38999"/>
<dbReference type="BioCyc" id="MetaCyc:MONOMER-13080"/>
<dbReference type="BRENDA" id="1.4.1.13">
    <property type="organism ID" value="611"/>
</dbReference>
<dbReference type="SABIO-RK" id="Q05756"/>
<dbReference type="UniPathway" id="UPA00045"/>
<dbReference type="UniPathway" id="UPA00634">
    <property type="reaction ID" value="UER00689"/>
</dbReference>
<dbReference type="EvolutionaryTrace" id="Q05756"/>
<dbReference type="GO" id="GO:0051539">
    <property type="term" value="F:4 iron, 4 sulfur cluster binding"/>
    <property type="evidence" value="ECO:0007669"/>
    <property type="project" value="UniProtKB-KW"/>
</dbReference>
<dbReference type="GO" id="GO:0004355">
    <property type="term" value="F:glutamate synthase (NADPH) activity"/>
    <property type="evidence" value="ECO:0007669"/>
    <property type="project" value="UniProtKB-EC"/>
</dbReference>
<dbReference type="GO" id="GO:0046872">
    <property type="term" value="F:metal ion binding"/>
    <property type="evidence" value="ECO:0007669"/>
    <property type="project" value="UniProtKB-KW"/>
</dbReference>
<dbReference type="GO" id="GO:0097054">
    <property type="term" value="P:L-glutamate biosynthetic process"/>
    <property type="evidence" value="ECO:0007669"/>
    <property type="project" value="UniProtKB-UniPathway"/>
</dbReference>
<dbReference type="Gene3D" id="1.10.1060.10">
    <property type="entry name" value="Alpha-helical ferredoxin"/>
    <property type="match status" value="1"/>
</dbReference>
<dbReference type="Gene3D" id="3.50.50.60">
    <property type="entry name" value="FAD/NAD(P)-binding domain"/>
    <property type="match status" value="1"/>
</dbReference>
<dbReference type="Gene3D" id="3.40.50.720">
    <property type="entry name" value="NAD(P)-binding Rossmann-like Domain"/>
    <property type="match status" value="1"/>
</dbReference>
<dbReference type="InterPro" id="IPR028261">
    <property type="entry name" value="DPD_II"/>
</dbReference>
<dbReference type="InterPro" id="IPR036188">
    <property type="entry name" value="FAD/NAD-bd_sf"/>
</dbReference>
<dbReference type="InterPro" id="IPR023753">
    <property type="entry name" value="FAD/NAD-binding_dom"/>
</dbReference>
<dbReference type="InterPro" id="IPR006006">
    <property type="entry name" value="GltD-like"/>
</dbReference>
<dbReference type="InterPro" id="IPR009051">
    <property type="entry name" value="Helical_ferredxn"/>
</dbReference>
<dbReference type="NCBIfam" id="TIGR01318">
    <property type="entry name" value="gltD_gamma_fam"/>
    <property type="match status" value="1"/>
</dbReference>
<dbReference type="PANTHER" id="PTHR42783">
    <property type="entry name" value="GLUTAMATE SYNTHASE [NADPH] SMALL CHAIN"/>
    <property type="match status" value="1"/>
</dbReference>
<dbReference type="PANTHER" id="PTHR42783:SF3">
    <property type="entry name" value="GLUTAMATE SYNTHASE [NADPH] SMALL CHAIN-RELATED"/>
    <property type="match status" value="1"/>
</dbReference>
<dbReference type="Pfam" id="PF14691">
    <property type="entry name" value="Fer4_20"/>
    <property type="match status" value="1"/>
</dbReference>
<dbReference type="Pfam" id="PF07992">
    <property type="entry name" value="Pyr_redox_2"/>
    <property type="match status" value="1"/>
</dbReference>
<dbReference type="PRINTS" id="PR00419">
    <property type="entry name" value="ADXRDTASE"/>
</dbReference>
<dbReference type="SUPFAM" id="SSF46548">
    <property type="entry name" value="alpha-helical ferredoxin"/>
    <property type="match status" value="1"/>
</dbReference>
<dbReference type="SUPFAM" id="SSF51971">
    <property type="entry name" value="Nucleotide-binding domain"/>
    <property type="match status" value="1"/>
</dbReference>